<sequence>MVHLAKYIVVTGGVVSSIGKGITAASIGRILRSYGLSVTAIKIDPYLNWDSGTLNPYQHGEVFVTDDGMETDLDLGHYERFLDSDLPGEANITTGKVYMSVINKERSGDYLGSCVQIIPHITDEIKSMIRKIADKSGAEVVLVEVGGTVGDIEGQPFLEALRQLRNEEGHENVMFVHVTYVPYLRAAGEFKTKPTQHSTKELRSTGINPDMIICRSEMPIDSSLKRKIAHFCDVEEEAVVNAPDASSIYEVPLVLDSERVGDYIVRRIELDVDGEADLSEWAGIVESLMIDEPVVTVGIVGKYVELEDSYISIREALKHAAAHLRVRVDIEWISADDAVNEEDLSRLDSILIPGGFGERGIAGKLEAVRFALENRVPIFGICLGMQCMVIEFARLNGMEGANSTEFDPETPYPVIDMMEEQKRIKNMGGTMRLGSYQCRIREGTLAHEAYGTELVGERHRHRFELNNEFREELESKGLIISGTSPDDFLVEMVEIKDHPWFLGCQFHPEFRSRPNRAHPLFVSFLRAALERSR</sequence>
<dbReference type="EC" id="6.3.4.2" evidence="1"/>
<dbReference type="EMBL" id="AE000666">
    <property type="protein sequence ID" value="AAB84925.1"/>
    <property type="molecule type" value="Genomic_DNA"/>
</dbReference>
<dbReference type="PIR" id="E69154">
    <property type="entry name" value="E69154"/>
</dbReference>
<dbReference type="RefSeq" id="WP_010876058.1">
    <property type="nucleotide sequence ID" value="NC_000916.1"/>
</dbReference>
<dbReference type="SMR" id="O26519"/>
<dbReference type="FunCoup" id="O26519">
    <property type="interactions" value="208"/>
</dbReference>
<dbReference type="STRING" id="187420.MTH_419"/>
<dbReference type="MEROPS" id="C26.964"/>
<dbReference type="PaxDb" id="187420-MTH_419"/>
<dbReference type="EnsemblBacteria" id="AAB84925">
    <property type="protein sequence ID" value="AAB84925"/>
    <property type="gene ID" value="MTH_419"/>
</dbReference>
<dbReference type="GeneID" id="1470380"/>
<dbReference type="GeneID" id="77400965"/>
<dbReference type="KEGG" id="mth:MTH_419"/>
<dbReference type="PATRIC" id="fig|187420.15.peg.389"/>
<dbReference type="HOGENOM" id="CLU_011675_5_0_2"/>
<dbReference type="InParanoid" id="O26519"/>
<dbReference type="UniPathway" id="UPA00159">
    <property type="reaction ID" value="UER00277"/>
</dbReference>
<dbReference type="Proteomes" id="UP000005223">
    <property type="component" value="Chromosome"/>
</dbReference>
<dbReference type="GO" id="GO:0005829">
    <property type="term" value="C:cytosol"/>
    <property type="evidence" value="ECO:0007669"/>
    <property type="project" value="TreeGrafter"/>
</dbReference>
<dbReference type="GO" id="GO:0005524">
    <property type="term" value="F:ATP binding"/>
    <property type="evidence" value="ECO:0007669"/>
    <property type="project" value="UniProtKB-KW"/>
</dbReference>
<dbReference type="GO" id="GO:0003883">
    <property type="term" value="F:CTP synthase activity"/>
    <property type="evidence" value="ECO:0007669"/>
    <property type="project" value="UniProtKB-UniRule"/>
</dbReference>
<dbReference type="GO" id="GO:0004359">
    <property type="term" value="F:glutaminase activity"/>
    <property type="evidence" value="ECO:0007669"/>
    <property type="project" value="RHEA"/>
</dbReference>
<dbReference type="GO" id="GO:0042802">
    <property type="term" value="F:identical protein binding"/>
    <property type="evidence" value="ECO:0007669"/>
    <property type="project" value="TreeGrafter"/>
</dbReference>
<dbReference type="GO" id="GO:0046872">
    <property type="term" value="F:metal ion binding"/>
    <property type="evidence" value="ECO:0007669"/>
    <property type="project" value="UniProtKB-KW"/>
</dbReference>
<dbReference type="GO" id="GO:0044210">
    <property type="term" value="P:'de novo' CTP biosynthetic process"/>
    <property type="evidence" value="ECO:0007669"/>
    <property type="project" value="UniProtKB-UniRule"/>
</dbReference>
<dbReference type="GO" id="GO:0019856">
    <property type="term" value="P:pyrimidine nucleobase biosynthetic process"/>
    <property type="evidence" value="ECO:0007669"/>
    <property type="project" value="TreeGrafter"/>
</dbReference>
<dbReference type="CDD" id="cd03113">
    <property type="entry name" value="CTPS_N"/>
    <property type="match status" value="1"/>
</dbReference>
<dbReference type="CDD" id="cd01746">
    <property type="entry name" value="GATase1_CTP_Synthase"/>
    <property type="match status" value="1"/>
</dbReference>
<dbReference type="FunFam" id="3.40.50.300:FF:000009">
    <property type="entry name" value="CTP synthase"/>
    <property type="match status" value="1"/>
</dbReference>
<dbReference type="FunFam" id="3.40.50.880:FF:000002">
    <property type="entry name" value="CTP synthase"/>
    <property type="match status" value="1"/>
</dbReference>
<dbReference type="Gene3D" id="3.40.50.880">
    <property type="match status" value="1"/>
</dbReference>
<dbReference type="Gene3D" id="3.40.50.300">
    <property type="entry name" value="P-loop containing nucleotide triphosphate hydrolases"/>
    <property type="match status" value="1"/>
</dbReference>
<dbReference type="HAMAP" id="MF_01227">
    <property type="entry name" value="PyrG"/>
    <property type="match status" value="1"/>
</dbReference>
<dbReference type="InterPro" id="IPR029062">
    <property type="entry name" value="Class_I_gatase-like"/>
</dbReference>
<dbReference type="InterPro" id="IPR004468">
    <property type="entry name" value="CTP_synthase"/>
</dbReference>
<dbReference type="InterPro" id="IPR017456">
    <property type="entry name" value="CTP_synthase_N"/>
</dbReference>
<dbReference type="InterPro" id="IPR017926">
    <property type="entry name" value="GATASE"/>
</dbReference>
<dbReference type="InterPro" id="IPR033828">
    <property type="entry name" value="GATase1_CTP_Synthase"/>
</dbReference>
<dbReference type="InterPro" id="IPR027417">
    <property type="entry name" value="P-loop_NTPase"/>
</dbReference>
<dbReference type="NCBIfam" id="NF003792">
    <property type="entry name" value="PRK05380.1"/>
    <property type="match status" value="1"/>
</dbReference>
<dbReference type="NCBIfam" id="TIGR00337">
    <property type="entry name" value="PyrG"/>
    <property type="match status" value="1"/>
</dbReference>
<dbReference type="PANTHER" id="PTHR11550">
    <property type="entry name" value="CTP SYNTHASE"/>
    <property type="match status" value="1"/>
</dbReference>
<dbReference type="PANTHER" id="PTHR11550:SF0">
    <property type="entry name" value="CTP SYNTHASE-RELATED"/>
    <property type="match status" value="1"/>
</dbReference>
<dbReference type="Pfam" id="PF06418">
    <property type="entry name" value="CTP_synth_N"/>
    <property type="match status" value="1"/>
</dbReference>
<dbReference type="Pfam" id="PF00117">
    <property type="entry name" value="GATase"/>
    <property type="match status" value="1"/>
</dbReference>
<dbReference type="SUPFAM" id="SSF52317">
    <property type="entry name" value="Class I glutamine amidotransferase-like"/>
    <property type="match status" value="1"/>
</dbReference>
<dbReference type="SUPFAM" id="SSF52540">
    <property type="entry name" value="P-loop containing nucleoside triphosphate hydrolases"/>
    <property type="match status" value="1"/>
</dbReference>
<dbReference type="PROSITE" id="PS51273">
    <property type="entry name" value="GATASE_TYPE_1"/>
    <property type="match status" value="1"/>
</dbReference>
<organism>
    <name type="scientific">Methanothermobacter thermautotrophicus (strain ATCC 29096 / DSM 1053 / JCM 10044 / NBRC 100330 / Delta H)</name>
    <name type="common">Methanobacterium thermoautotrophicum</name>
    <dbReference type="NCBI Taxonomy" id="187420"/>
    <lineage>
        <taxon>Archaea</taxon>
        <taxon>Methanobacteriati</taxon>
        <taxon>Methanobacteriota</taxon>
        <taxon>Methanomada group</taxon>
        <taxon>Methanobacteria</taxon>
        <taxon>Methanobacteriales</taxon>
        <taxon>Methanobacteriaceae</taxon>
        <taxon>Methanothermobacter</taxon>
    </lineage>
</organism>
<keyword id="KW-0067">ATP-binding</keyword>
<keyword id="KW-0315">Glutamine amidotransferase</keyword>
<keyword id="KW-0436">Ligase</keyword>
<keyword id="KW-0460">Magnesium</keyword>
<keyword id="KW-0479">Metal-binding</keyword>
<keyword id="KW-0547">Nucleotide-binding</keyword>
<keyword id="KW-0665">Pyrimidine biosynthesis</keyword>
<keyword id="KW-1185">Reference proteome</keyword>
<evidence type="ECO:0000255" key="1">
    <source>
        <dbReference type="HAMAP-Rule" id="MF_01227"/>
    </source>
</evidence>
<proteinExistence type="inferred from homology"/>
<comment type="function">
    <text evidence="1">Catalyzes the ATP-dependent amination of UTP to CTP with either L-glutamine or ammonia as the source of nitrogen. Regulates intracellular CTP levels through interactions with the four ribonucleotide triphosphates.</text>
</comment>
<comment type="catalytic activity">
    <reaction evidence="1">
        <text>UTP + L-glutamine + ATP + H2O = CTP + L-glutamate + ADP + phosphate + 2 H(+)</text>
        <dbReference type="Rhea" id="RHEA:26426"/>
        <dbReference type="ChEBI" id="CHEBI:15377"/>
        <dbReference type="ChEBI" id="CHEBI:15378"/>
        <dbReference type="ChEBI" id="CHEBI:29985"/>
        <dbReference type="ChEBI" id="CHEBI:30616"/>
        <dbReference type="ChEBI" id="CHEBI:37563"/>
        <dbReference type="ChEBI" id="CHEBI:43474"/>
        <dbReference type="ChEBI" id="CHEBI:46398"/>
        <dbReference type="ChEBI" id="CHEBI:58359"/>
        <dbReference type="ChEBI" id="CHEBI:456216"/>
        <dbReference type="EC" id="6.3.4.2"/>
    </reaction>
</comment>
<comment type="catalytic activity">
    <reaction evidence="1">
        <text>L-glutamine + H2O = L-glutamate + NH4(+)</text>
        <dbReference type="Rhea" id="RHEA:15889"/>
        <dbReference type="ChEBI" id="CHEBI:15377"/>
        <dbReference type="ChEBI" id="CHEBI:28938"/>
        <dbReference type="ChEBI" id="CHEBI:29985"/>
        <dbReference type="ChEBI" id="CHEBI:58359"/>
    </reaction>
</comment>
<comment type="catalytic activity">
    <reaction evidence="1">
        <text>UTP + NH4(+) + ATP = CTP + ADP + phosphate + 2 H(+)</text>
        <dbReference type="Rhea" id="RHEA:16597"/>
        <dbReference type="ChEBI" id="CHEBI:15378"/>
        <dbReference type="ChEBI" id="CHEBI:28938"/>
        <dbReference type="ChEBI" id="CHEBI:30616"/>
        <dbReference type="ChEBI" id="CHEBI:37563"/>
        <dbReference type="ChEBI" id="CHEBI:43474"/>
        <dbReference type="ChEBI" id="CHEBI:46398"/>
        <dbReference type="ChEBI" id="CHEBI:456216"/>
    </reaction>
</comment>
<comment type="activity regulation">
    <text evidence="1">Allosterically activated by GTP, when glutamine is the substrate; GTP has no effect on the reaction when ammonia is the substrate. The allosteric effector GTP functions by stabilizing the protein conformation that binds the tetrahedral intermediate(s) formed during glutamine hydrolysis. Inhibited by the product CTP, via allosteric rather than competitive inhibition.</text>
</comment>
<comment type="pathway">
    <text evidence="1">Pyrimidine metabolism; CTP biosynthesis via de novo pathway; CTP from UDP: step 2/2.</text>
</comment>
<comment type="subunit">
    <text evidence="1">Homotetramer.</text>
</comment>
<comment type="miscellaneous">
    <text evidence="1">CTPSs have evolved a hybrid strategy for distinguishing between UTP and CTP. The overlapping regions of the product feedback inhibitory and substrate sites recognize a common feature in both compounds, the triphosphate moiety. To differentiate isosteric substrate and product pyrimidine rings, an additional pocket far from the expected kinase/ligase catalytic site, specifically recognizes the cytosine and ribose portions of the product inhibitor.</text>
</comment>
<comment type="similarity">
    <text evidence="1">Belongs to the CTP synthase family.</text>
</comment>
<reference key="1">
    <citation type="journal article" date="1997" name="J. Bacteriol.">
        <title>Complete genome sequence of Methanobacterium thermoautotrophicum deltaH: functional analysis and comparative genomics.</title>
        <authorList>
            <person name="Smith D.R."/>
            <person name="Doucette-Stamm L.A."/>
            <person name="Deloughery C."/>
            <person name="Lee H.-M."/>
            <person name="Dubois J."/>
            <person name="Aldredge T."/>
            <person name="Bashirzadeh R."/>
            <person name="Blakely D."/>
            <person name="Cook R."/>
            <person name="Gilbert K."/>
            <person name="Harrison D."/>
            <person name="Hoang L."/>
            <person name="Keagle P."/>
            <person name="Lumm W."/>
            <person name="Pothier B."/>
            <person name="Qiu D."/>
            <person name="Spadafora R."/>
            <person name="Vicare R."/>
            <person name="Wang Y."/>
            <person name="Wierzbowski J."/>
            <person name="Gibson R."/>
            <person name="Jiwani N."/>
            <person name="Caruso A."/>
            <person name="Bush D."/>
            <person name="Safer H."/>
            <person name="Patwell D."/>
            <person name="Prabhakar S."/>
            <person name="McDougall S."/>
            <person name="Shimer G."/>
            <person name="Goyal A."/>
            <person name="Pietrovski S."/>
            <person name="Church G.M."/>
            <person name="Daniels C.J."/>
            <person name="Mao J.-I."/>
            <person name="Rice P."/>
            <person name="Noelling J."/>
            <person name="Reeve J.N."/>
        </authorList>
    </citation>
    <scope>NUCLEOTIDE SEQUENCE [LARGE SCALE GENOMIC DNA]</scope>
    <source>
        <strain>ATCC 29096 / DSM 1053 / JCM 10044 / NBRC 100330 / Delta H</strain>
    </source>
</reference>
<feature type="chain" id="PRO_0000138263" description="CTP synthase">
    <location>
        <begin position="1"/>
        <end position="533"/>
    </location>
</feature>
<feature type="domain" description="Glutamine amidotransferase type-1" evidence="1">
    <location>
        <begin position="303"/>
        <end position="533"/>
    </location>
</feature>
<feature type="region of interest" description="Amidoligase domain" evidence="1">
    <location>
        <begin position="1"/>
        <end position="270"/>
    </location>
</feature>
<feature type="active site" description="Nucleophile; for glutamine hydrolysis" evidence="1">
    <location>
        <position position="382"/>
    </location>
</feature>
<feature type="active site" evidence="1">
    <location>
        <position position="507"/>
    </location>
</feature>
<feature type="active site" evidence="1">
    <location>
        <position position="509"/>
    </location>
</feature>
<feature type="binding site" evidence="1">
    <location>
        <position position="16"/>
    </location>
    <ligand>
        <name>CTP</name>
        <dbReference type="ChEBI" id="CHEBI:37563"/>
        <note>allosteric inhibitor</note>
    </ligand>
</feature>
<feature type="binding site" evidence="1">
    <location>
        <position position="16"/>
    </location>
    <ligand>
        <name>UTP</name>
        <dbReference type="ChEBI" id="CHEBI:46398"/>
    </ligand>
</feature>
<feature type="binding site" evidence="1">
    <location>
        <begin position="17"/>
        <end position="22"/>
    </location>
    <ligand>
        <name>ATP</name>
        <dbReference type="ChEBI" id="CHEBI:30616"/>
    </ligand>
</feature>
<feature type="binding site" evidence="1">
    <location>
        <position position="57"/>
    </location>
    <ligand>
        <name>L-glutamine</name>
        <dbReference type="ChEBI" id="CHEBI:58359"/>
    </ligand>
</feature>
<feature type="binding site" evidence="1">
    <location>
        <position position="74"/>
    </location>
    <ligand>
        <name>ATP</name>
        <dbReference type="ChEBI" id="CHEBI:30616"/>
    </ligand>
</feature>
<feature type="binding site" evidence="1">
    <location>
        <position position="74"/>
    </location>
    <ligand>
        <name>Mg(2+)</name>
        <dbReference type="ChEBI" id="CHEBI:18420"/>
    </ligand>
</feature>
<feature type="binding site" evidence="1">
    <location>
        <position position="144"/>
    </location>
    <ligand>
        <name>Mg(2+)</name>
        <dbReference type="ChEBI" id="CHEBI:18420"/>
    </ligand>
</feature>
<feature type="binding site" evidence="1">
    <location>
        <begin position="151"/>
        <end position="153"/>
    </location>
    <ligand>
        <name>CTP</name>
        <dbReference type="ChEBI" id="CHEBI:37563"/>
        <note>allosteric inhibitor</note>
    </ligand>
</feature>
<feature type="binding site" evidence="1">
    <location>
        <begin position="191"/>
        <end position="196"/>
    </location>
    <ligand>
        <name>CTP</name>
        <dbReference type="ChEBI" id="CHEBI:37563"/>
        <note>allosteric inhibitor</note>
    </ligand>
</feature>
<feature type="binding site" evidence="1">
    <location>
        <begin position="191"/>
        <end position="196"/>
    </location>
    <ligand>
        <name>UTP</name>
        <dbReference type="ChEBI" id="CHEBI:46398"/>
    </ligand>
</feature>
<feature type="binding site" evidence="1">
    <location>
        <position position="227"/>
    </location>
    <ligand>
        <name>CTP</name>
        <dbReference type="ChEBI" id="CHEBI:37563"/>
        <note>allosteric inhibitor</note>
    </ligand>
</feature>
<feature type="binding site" evidence="1">
    <location>
        <position position="227"/>
    </location>
    <ligand>
        <name>UTP</name>
        <dbReference type="ChEBI" id="CHEBI:46398"/>
    </ligand>
</feature>
<feature type="binding site" evidence="1">
    <location>
        <position position="355"/>
    </location>
    <ligand>
        <name>L-glutamine</name>
        <dbReference type="ChEBI" id="CHEBI:58359"/>
    </ligand>
</feature>
<feature type="binding site" evidence="1">
    <location>
        <begin position="383"/>
        <end position="386"/>
    </location>
    <ligand>
        <name>L-glutamine</name>
        <dbReference type="ChEBI" id="CHEBI:58359"/>
    </ligand>
</feature>
<feature type="binding site" evidence="1">
    <location>
        <position position="405"/>
    </location>
    <ligand>
        <name>L-glutamine</name>
        <dbReference type="ChEBI" id="CHEBI:58359"/>
    </ligand>
</feature>
<feature type="binding site" evidence="1">
    <location>
        <position position="462"/>
    </location>
    <ligand>
        <name>L-glutamine</name>
        <dbReference type="ChEBI" id="CHEBI:58359"/>
    </ligand>
</feature>
<accession>O26519</accession>
<protein>
    <recommendedName>
        <fullName evidence="1">CTP synthase</fullName>
        <ecNumber evidence="1">6.3.4.2</ecNumber>
    </recommendedName>
    <alternativeName>
        <fullName evidence="1">Cytidine 5'-triphosphate synthase</fullName>
    </alternativeName>
    <alternativeName>
        <fullName evidence="1">Cytidine triphosphate synthetase</fullName>
        <shortName evidence="1">CTP synthetase</shortName>
        <shortName evidence="1">CTPS</shortName>
    </alternativeName>
    <alternativeName>
        <fullName evidence="1">UTP--ammonia ligase</fullName>
    </alternativeName>
</protein>
<name>PYRG_METTH</name>
<gene>
    <name evidence="1" type="primary">pyrG</name>
    <name type="ordered locus">MTH_419</name>
</gene>